<feature type="signal peptide" evidence="1">
    <location>
        <begin position="1"/>
        <end position="21"/>
    </location>
</feature>
<feature type="chain" id="PRO_0000018926" description="H-2 class I histocompatibility antigen, D-P alpha chain">
    <location>
        <begin position="22"/>
        <end position="368"/>
    </location>
</feature>
<feature type="topological domain" description="Extracellular" evidence="3">
    <location>
        <begin position="22"/>
        <end position="303"/>
    </location>
</feature>
<feature type="transmembrane region" description="Helical" evidence="3">
    <location>
        <begin position="304"/>
        <end position="330"/>
    </location>
</feature>
<feature type="topological domain" description="Cytoplasmic" evidence="3">
    <location>
        <begin position="331"/>
        <end position="368"/>
    </location>
</feature>
<feature type="domain" description="Ig-like C1-type">
    <location>
        <begin position="206"/>
        <end position="294"/>
    </location>
</feature>
<feature type="region of interest" description="Alpha-1">
    <location>
        <begin position="22"/>
        <end position="111"/>
    </location>
</feature>
<feature type="region of interest" description="Alpha-2">
    <location>
        <begin position="112"/>
        <end position="203"/>
    </location>
</feature>
<feature type="region of interest" description="Alpha-3">
    <location>
        <begin position="204"/>
        <end position="295"/>
    </location>
</feature>
<feature type="region of interest" description="Connecting peptide">
    <location>
        <begin position="296"/>
        <end position="303"/>
    </location>
</feature>
<feature type="modified residue" description="Phosphoserine" evidence="2">
    <location>
        <position position="350"/>
    </location>
</feature>
<feature type="modified residue" description="Phosphoserine" evidence="2">
    <location>
        <position position="353"/>
    </location>
</feature>
<feature type="glycosylation site" description="N-linked (GlcNAc...) asparagine" evidence="3">
    <location>
        <position position="107"/>
    </location>
</feature>
<feature type="glycosylation site" description="N-linked (GlcNAc...) asparagine" evidence="3">
    <location>
        <position position="197"/>
    </location>
</feature>
<feature type="glycosylation site" description="N-linked (GlcNAc...) asparagine" evidence="3">
    <location>
        <position position="277"/>
    </location>
</feature>
<feature type="disulfide bond" evidence="4">
    <location>
        <begin position="122"/>
        <end position="185"/>
    </location>
</feature>
<feature type="disulfide bond" evidence="4">
    <location>
        <begin position="224"/>
        <end position="280"/>
    </location>
</feature>
<protein>
    <recommendedName>
        <fullName>H-2 class I histocompatibility antigen, D-P alpha chain</fullName>
        <shortName>H-2D(P)</shortName>
    </recommendedName>
</protein>
<accession>P14427</accession>
<keyword id="KW-1015">Disulfide bond</keyword>
<keyword id="KW-0325">Glycoprotein</keyword>
<keyword id="KW-0391">Immunity</keyword>
<keyword id="KW-0472">Membrane</keyword>
<keyword id="KW-0490">MHC I</keyword>
<keyword id="KW-0597">Phosphoprotein</keyword>
<keyword id="KW-1185">Reference proteome</keyword>
<keyword id="KW-0732">Signal</keyword>
<keyword id="KW-0812">Transmembrane</keyword>
<keyword id="KW-1133">Transmembrane helix</keyword>
<reference key="1">
    <citation type="journal article" date="1986" name="J. Immunol.">
        <title>The nucleotide sequence and comparative analysis of the H-2Dp class I H-2 gene.</title>
        <authorList>
            <person name="Schepart B.S."/>
            <person name="Takahashi H."/>
            <person name="Cozad K.M."/>
            <person name="Murray R."/>
            <person name="Ozato K."/>
            <person name="Appella E."/>
            <person name="Frelinger J.A."/>
        </authorList>
    </citation>
    <scope>NUCLEOTIDE SEQUENCE [GENOMIC DNA]</scope>
</reference>
<reference key="2">
    <citation type="journal article" date="1988" name="Nucleic Acids Res.">
        <title>Random oligonucleotide mutagenesis: application to a large protein coding sequence of a major histocompatibility complex class I gene, H-2DP.</title>
        <authorList>
            <person name="Murray R."/>
            <person name="Pederson K."/>
            <person name="Prosser H."/>
            <person name="Muller D."/>
            <person name="Hutchison C.A. III"/>
            <person name="Frelinger J.A."/>
        </authorList>
    </citation>
    <scope>NUCLEOTIDE SEQUENCE [GENOMIC DNA] OF 22-111</scope>
</reference>
<reference key="3">
    <citation type="journal article" date="2010" name="Cell">
        <title>A tissue-specific atlas of mouse protein phosphorylation and expression.</title>
        <authorList>
            <person name="Huttlin E.L."/>
            <person name="Jedrychowski M.P."/>
            <person name="Elias J.E."/>
            <person name="Goswami T."/>
            <person name="Rad R."/>
            <person name="Beausoleil S.A."/>
            <person name="Villen J."/>
            <person name="Haas W."/>
            <person name="Sowa M.E."/>
            <person name="Gygi S.P."/>
        </authorList>
    </citation>
    <scope>IDENTIFICATION BY MASS SPECTROMETRY [LARGE SCALE ANALYSIS]</scope>
    <source>
        <tissue>Brown adipose tissue</tissue>
        <tissue>Kidney</tissue>
        <tissue>Liver</tissue>
        <tissue>Lung</tissue>
        <tissue>Spleen</tissue>
    </source>
</reference>
<organism>
    <name type="scientific">Mus musculus</name>
    <name type="common">Mouse</name>
    <dbReference type="NCBI Taxonomy" id="10090"/>
    <lineage>
        <taxon>Eukaryota</taxon>
        <taxon>Metazoa</taxon>
        <taxon>Chordata</taxon>
        <taxon>Craniata</taxon>
        <taxon>Vertebrata</taxon>
        <taxon>Euteleostomi</taxon>
        <taxon>Mammalia</taxon>
        <taxon>Eutheria</taxon>
        <taxon>Euarchontoglires</taxon>
        <taxon>Glires</taxon>
        <taxon>Rodentia</taxon>
        <taxon>Myomorpha</taxon>
        <taxon>Muroidea</taxon>
        <taxon>Muridae</taxon>
        <taxon>Murinae</taxon>
        <taxon>Mus</taxon>
        <taxon>Mus</taxon>
    </lineage>
</organism>
<proteinExistence type="evidence at protein level"/>
<gene>
    <name type="primary">H2-D1</name>
</gene>
<sequence>MAPRTLLLLLAAALAPTQTRAGPHSLRYFVTAVSRPGLGKPRYMEVGYVDNTEFVRFDSDAENPRMKPRVRWMEQEGPEYWEQETQNAKDHEQSFRVSLRNLLGYYNQSKGGSHTIQGMRGCDVGSDWRLLRGYEQFAYDGPDYIALNEDLKTWTAADMAAQITRRKWEQAGAAETLRAYLEGACVEWLRRYLELGNATLLCTDPPKAHVTHHPRSEGKVTLRCWALGFYPADITLTWQLNGEELTQDMELVETRPAGDGTFQKWAALVVPLGKEQNYTCHVEHEGLPEPLTLRWEPPPSTDSYMVIVAVLVVLGAVFIIGAVVAFVMMMRRNTGGKGGDYTLAPGSQSSEMSLRDCKVMVHDSHSLA</sequence>
<comment type="function">
    <text>Involved in the presentation of foreign antigens to the immune system.</text>
</comment>
<comment type="subunit">
    <text>Heterodimer of an alpha chain and a beta chain (beta-2-microglobulin).</text>
</comment>
<comment type="subcellular location">
    <subcellularLocation>
        <location>Membrane</location>
        <topology>Single-pass type I membrane protein</topology>
    </subcellularLocation>
</comment>
<comment type="similarity">
    <text evidence="5">Belongs to the MHC class I family.</text>
</comment>
<evidence type="ECO:0000250" key="1"/>
<evidence type="ECO:0000250" key="2">
    <source>
        <dbReference type="UniProtKB" id="P01900"/>
    </source>
</evidence>
<evidence type="ECO:0000255" key="3"/>
<evidence type="ECO:0000255" key="4">
    <source>
        <dbReference type="PROSITE-ProRule" id="PRU00114"/>
    </source>
</evidence>
<evidence type="ECO:0000305" key="5"/>
<name>HA14_MOUSE</name>
<dbReference type="EMBL" id="M12381">
    <property type="protein sequence ID" value="AAA39603.1"/>
    <property type="molecule type" value="Genomic_DNA"/>
</dbReference>
<dbReference type="PIR" id="I55961">
    <property type="entry name" value="I55961"/>
</dbReference>
<dbReference type="SMR" id="P14427"/>
<dbReference type="FunCoup" id="P14427">
    <property type="interactions" value="194"/>
</dbReference>
<dbReference type="GlyCosmos" id="P14427">
    <property type="glycosylation" value="3 sites, No reported glycans"/>
</dbReference>
<dbReference type="GlyGen" id="P14427">
    <property type="glycosylation" value="4 sites, 1 O-linked glycan (1 site)"/>
</dbReference>
<dbReference type="iPTMnet" id="P14427"/>
<dbReference type="PhosphoSitePlus" id="P14427"/>
<dbReference type="jPOST" id="P14427"/>
<dbReference type="PeptideAtlas" id="P14427"/>
<dbReference type="ProteomicsDB" id="269798"/>
<dbReference type="Pumba" id="P14427"/>
<dbReference type="AGR" id="MGI:95896"/>
<dbReference type="MGI" id="MGI:95896">
    <property type="gene designation" value="H2-D1"/>
</dbReference>
<dbReference type="InParanoid" id="P14427"/>
<dbReference type="Reactome" id="R-MMU-1236974">
    <property type="pathway name" value="ER-Phagosome pathway"/>
</dbReference>
<dbReference type="Reactome" id="R-MMU-1236977">
    <property type="pathway name" value="Endosomal/Vacuolar pathway"/>
</dbReference>
<dbReference type="Reactome" id="R-MMU-198933">
    <property type="pathway name" value="Immunoregulatory interactions between a Lymphoid and a non-Lymphoid cell"/>
</dbReference>
<dbReference type="Reactome" id="R-MMU-2172127">
    <property type="pathway name" value="DAP12 interactions"/>
</dbReference>
<dbReference type="Reactome" id="R-MMU-6798695">
    <property type="pathway name" value="Neutrophil degranulation"/>
</dbReference>
<dbReference type="Reactome" id="R-MMU-983170">
    <property type="pathway name" value="Antigen Presentation: Folding, assembly and peptide loading of class I MHC"/>
</dbReference>
<dbReference type="ChiTaRS" id="H2-D1">
    <property type="organism name" value="mouse"/>
</dbReference>
<dbReference type="Proteomes" id="UP000000589">
    <property type="component" value="Unplaced"/>
</dbReference>
<dbReference type="RNAct" id="P14427">
    <property type="molecule type" value="protein"/>
</dbReference>
<dbReference type="GO" id="GO:0009897">
    <property type="term" value="C:external side of plasma membrane"/>
    <property type="evidence" value="ECO:0000314"/>
    <property type="project" value="MGI"/>
</dbReference>
<dbReference type="GO" id="GO:0098553">
    <property type="term" value="C:lumenal side of endoplasmic reticulum membrane"/>
    <property type="evidence" value="ECO:0000304"/>
    <property type="project" value="Reactome"/>
</dbReference>
<dbReference type="GO" id="GO:0042612">
    <property type="term" value="C:MHC class I protein complex"/>
    <property type="evidence" value="ECO:0007669"/>
    <property type="project" value="UniProtKB-KW"/>
</dbReference>
<dbReference type="GO" id="GO:0030670">
    <property type="term" value="C:phagocytic vesicle membrane"/>
    <property type="evidence" value="ECO:0000304"/>
    <property type="project" value="Reactome"/>
</dbReference>
<dbReference type="GO" id="GO:0005886">
    <property type="term" value="C:plasma membrane"/>
    <property type="evidence" value="ECO:0000314"/>
    <property type="project" value="MGI"/>
</dbReference>
<dbReference type="GO" id="GO:0002485">
    <property type="term" value="P:antigen processing and presentation of endogenous peptide antigen via MHC class I via ER pathway, TAP-dependent"/>
    <property type="evidence" value="ECO:0000314"/>
    <property type="project" value="MGI"/>
</dbReference>
<dbReference type="GO" id="GO:0010977">
    <property type="term" value="P:negative regulation of neuron projection development"/>
    <property type="evidence" value="ECO:0000314"/>
    <property type="project" value="MGI"/>
</dbReference>
<dbReference type="GO" id="GO:0001916">
    <property type="term" value="P:positive regulation of T cell mediated cytotoxicity"/>
    <property type="evidence" value="ECO:0000314"/>
    <property type="project" value="MGI"/>
</dbReference>
<dbReference type="GO" id="GO:0001913">
    <property type="term" value="P:T cell mediated cytotoxicity"/>
    <property type="evidence" value="ECO:0000314"/>
    <property type="project" value="MGI"/>
</dbReference>
<dbReference type="FunFam" id="2.60.40.10:FF:000014">
    <property type="entry name" value="H-2 class I histocompatibility antigen, alpha chain"/>
    <property type="match status" value="1"/>
</dbReference>
<dbReference type="FunFam" id="3.30.500.10:FF:000001">
    <property type="entry name" value="H-2 class I histocompatibility antigen, alpha chain"/>
    <property type="match status" value="1"/>
</dbReference>
<dbReference type="Gene3D" id="2.60.40.10">
    <property type="entry name" value="Immunoglobulins"/>
    <property type="match status" value="1"/>
</dbReference>
<dbReference type="Gene3D" id="3.30.500.10">
    <property type="entry name" value="MHC class I-like antigen recognition-like"/>
    <property type="match status" value="1"/>
</dbReference>
<dbReference type="InterPro" id="IPR007110">
    <property type="entry name" value="Ig-like_dom"/>
</dbReference>
<dbReference type="InterPro" id="IPR036179">
    <property type="entry name" value="Ig-like_dom_sf"/>
</dbReference>
<dbReference type="InterPro" id="IPR013783">
    <property type="entry name" value="Ig-like_fold"/>
</dbReference>
<dbReference type="InterPro" id="IPR003006">
    <property type="entry name" value="Ig/MHC_CS"/>
</dbReference>
<dbReference type="InterPro" id="IPR003597">
    <property type="entry name" value="Ig_C1-set"/>
</dbReference>
<dbReference type="InterPro" id="IPR050208">
    <property type="entry name" value="MHC_class-I_related"/>
</dbReference>
<dbReference type="InterPro" id="IPR011161">
    <property type="entry name" value="MHC_I-like_Ag-recog"/>
</dbReference>
<dbReference type="InterPro" id="IPR037055">
    <property type="entry name" value="MHC_I-like_Ag-recog_sf"/>
</dbReference>
<dbReference type="InterPro" id="IPR011162">
    <property type="entry name" value="MHC_I/II-like_Ag-recog"/>
</dbReference>
<dbReference type="InterPro" id="IPR001039">
    <property type="entry name" value="MHC_I_a_a1/a2"/>
</dbReference>
<dbReference type="InterPro" id="IPR010579">
    <property type="entry name" value="MHC_I_a_C"/>
</dbReference>
<dbReference type="PANTHER" id="PTHR16675:SF251">
    <property type="entry name" value="HLA CLASS I HISTOCOMPATIBILITY ANTIGEN, C ALPHA CHAIN"/>
    <property type="match status" value="1"/>
</dbReference>
<dbReference type="PANTHER" id="PTHR16675">
    <property type="entry name" value="MHC CLASS I-RELATED"/>
    <property type="match status" value="1"/>
</dbReference>
<dbReference type="Pfam" id="PF07654">
    <property type="entry name" value="C1-set"/>
    <property type="match status" value="1"/>
</dbReference>
<dbReference type="Pfam" id="PF00129">
    <property type="entry name" value="MHC_I"/>
    <property type="match status" value="1"/>
</dbReference>
<dbReference type="Pfam" id="PF06623">
    <property type="entry name" value="MHC_I_C"/>
    <property type="match status" value="1"/>
</dbReference>
<dbReference type="PRINTS" id="PR01638">
    <property type="entry name" value="MHCCLASSI"/>
</dbReference>
<dbReference type="SMART" id="SM00407">
    <property type="entry name" value="IGc1"/>
    <property type="match status" value="1"/>
</dbReference>
<dbReference type="SUPFAM" id="SSF48726">
    <property type="entry name" value="Immunoglobulin"/>
    <property type="match status" value="1"/>
</dbReference>
<dbReference type="SUPFAM" id="SSF54452">
    <property type="entry name" value="MHC antigen-recognition domain"/>
    <property type="match status" value="1"/>
</dbReference>
<dbReference type="PROSITE" id="PS50835">
    <property type="entry name" value="IG_LIKE"/>
    <property type="match status" value="1"/>
</dbReference>
<dbReference type="PROSITE" id="PS00290">
    <property type="entry name" value="IG_MHC"/>
    <property type="match status" value="1"/>
</dbReference>